<gene>
    <name type="primary">EEF2</name>
</gene>
<protein>
    <recommendedName>
        <fullName>Elongation factor 2</fullName>
        <shortName>EF-2</shortName>
        <ecNumber evidence="2">3.6.5.-</ecNumber>
    </recommendedName>
</protein>
<accession>Q5R8Z3</accession>
<accession>Q5RBA6</accession>
<comment type="function">
    <text evidence="2">Catalyzes the GTP-dependent ribosomal translocation step during translation elongation. During this step, the ribosome changes from the pre-translocational (PRE) to the post-translocational (POST) state as the newly formed A-site-bound peptidyl-tRNA and P-site-bound deacylated tRNA move to the P and E sites, respectively. Catalyzes the coordinated movement of the two tRNA molecules, the mRNA and conformational changes in the ribosome.</text>
</comment>
<comment type="catalytic activity">
    <reaction evidence="2">
        <text>GTP + H2O = GDP + phosphate + H(+)</text>
        <dbReference type="Rhea" id="RHEA:19669"/>
        <dbReference type="ChEBI" id="CHEBI:15377"/>
        <dbReference type="ChEBI" id="CHEBI:15378"/>
        <dbReference type="ChEBI" id="CHEBI:37565"/>
        <dbReference type="ChEBI" id="CHEBI:43474"/>
        <dbReference type="ChEBI" id="CHEBI:58189"/>
    </reaction>
    <physiologicalReaction direction="left-to-right" evidence="2">
        <dbReference type="Rhea" id="RHEA:19670"/>
    </physiologicalReaction>
</comment>
<comment type="subunit">
    <text evidence="2 5">Binds to 80S ribosomes. Actively translating ribosomes show mutually exclusive binding of eIF5a (EIF5A or EIF5A2) and EEF2/eEF2. Interacts with SERBP1; interaction sequesters EEF2/eEF2 at the A-site of the ribosome, thereby blocking the interaction sites of the mRNA-tRNA complex, promoting ribosome stabilization and hibernation (By similarity). Interacts with HABP4; interaction takes place at the A-site of hibernating ribosomes and promotes ribosome stabilization (By similarity). Component of the mRNA surveillance SURF complex, at least composed of ERF1, ERF3 (ERF3A or ERF3B), EEF2, UPF1/RENT1, SMG1, SMG8 and SMG9. Interacts with RBPMS2 (By similarity).</text>
</comment>
<comment type="subcellular location">
    <subcellularLocation>
        <location evidence="2">Cytoplasm</location>
    </subcellularLocation>
    <subcellularLocation>
        <location evidence="2">Nucleus</location>
    </subcellularLocation>
    <text evidence="2">Phosphorylation by CSK promotes cleavage and SUMOylation-dependent nuclear translocation of the C-terminal cleavage product.</text>
</comment>
<comment type="PTM">
    <text evidence="2">Phosphorylation by EF-2 kinase completely inactivates EF-2; it requires prior phosphorylation by CDK2 at Ser-595 during mitotic prometaphase. Phosphorylation by CSK promotes SUMOylation, proteolytic cleavage, and nuclear translocation if the C-terminal fragment.</text>
</comment>
<comment type="PTM">
    <text evidence="1">Diphthamide is 2-[3-carboxyamido-3-(trimethyl-ammonio)propyl]histidine (By similarity).</text>
</comment>
<comment type="PTM">
    <text evidence="2">ISGylated.</text>
</comment>
<comment type="PTM">
    <text evidence="2">Proteolytically processed at two sites following phosphorylation by CSK.</text>
</comment>
<comment type="PTM">
    <text evidence="2">SUMOylated following phosphorylation by CSK, promotes proteolytic cleavage.</text>
</comment>
<comment type="similarity">
    <text evidence="6">Belongs to the TRAFAC class translation factor GTPase superfamily. Classic translation factor GTPase family. EF-G/EF-2 subfamily.</text>
</comment>
<sequence length="858" mass="95338">MVNFTVDQIRAIMDKKANIRNMSVIAHVDHGKSTLTDSLVCKAGIIASARAGETRFTDTRKDEQERCITIKSTAISLFYELSENDLNFIKQSKDGAGFLINLIDSPGHVDFSSEVTAALRVTDGALVVVDCVSGVCVQTETVLRQAIAERIKPVLMMNKMDRALLELQLEPEELYQTFQRIVENVNVIISTYGEGESGPMGNIMIDPVLGTVGFGSGLHGWAFTLKQFAEMYVAKFAAKGEGQLGPAERAKKVEDMMKKLWGDRYFDPANGKFSKSATSPEGKKLPRTFCQLILDPIFKVFDAIMNFKKEETAKLIEKLDIKLDSEDKDKEGKPLLKAVMRRWLPAGDALLQMITIHLPSPVTAQKYRCELLYEGPPDDEAAMGIKSCDPKGPLMMYISKMVPTSDKGRFYAFGRVFSGLVSTGLKVRIMGPNYTPGKKEDLYLKPIQRTILMMGRYVEPIEDVPCGNIVGLVGVDQFLVKTGTITTFEHAHNMRVMKFSVSPVVRVAVEAKNPADLPKLVEGLKRLAKSDPMVQCIIEESGEHIIAGAGELHLEICLKDLEEDHACIPIKKSDPVVSYRETVSEESNVLCLSKSPNKHNRLYMKARPFPDGLAEDIDKGEVSARQELKQRARYLAEKYEWDVAEARKIWCFGPDGTGPNILTDITKGVQYLNEIKDSVVAGFQWATKEGALCEENMRGVRFDVHDVTLHADAIHRGGGQIIPTARRCLYASVLTAQPRLMEPIYLVEIQCPEQVVGGIYGVLNRKRGHVFEESQVAGTPMFVVKAYLPVNESFGFTADLRSNTGGQAFPQCVFDHWQILPGDPFDNSSRPSQVVAETRKRKGLKEGIPALDNFLDKL</sequence>
<name>EF2_PONAB</name>
<reference key="1">
    <citation type="submission" date="2004-11" db="EMBL/GenBank/DDBJ databases">
        <authorList>
            <consortium name="The German cDNA consortium"/>
        </authorList>
    </citation>
    <scope>NUCLEOTIDE SEQUENCE [LARGE SCALE MRNA]</scope>
    <source>
        <tissue>Heart</tissue>
    </source>
</reference>
<feature type="chain" id="PRO_0000223487" description="Elongation factor 2">
    <location>
        <begin position="1"/>
        <end position="858"/>
    </location>
</feature>
<feature type="domain" description="tr-type G" evidence="6">
    <location>
        <begin position="17"/>
        <end position="362"/>
    </location>
</feature>
<feature type="binding site" evidence="3">
    <location>
        <begin position="26"/>
        <end position="33"/>
    </location>
    <ligand>
        <name>GTP</name>
        <dbReference type="ChEBI" id="CHEBI:37565"/>
    </ligand>
</feature>
<feature type="binding site" evidence="3">
    <location>
        <begin position="158"/>
        <end position="161"/>
    </location>
    <ligand>
        <name>GTP</name>
        <dbReference type="ChEBI" id="CHEBI:37565"/>
    </ligand>
</feature>
<feature type="binding site" evidence="3">
    <location>
        <begin position="216"/>
        <end position="218"/>
    </location>
    <ligand>
        <name>GTP</name>
        <dbReference type="ChEBI" id="CHEBI:37565"/>
    </ligand>
</feature>
<feature type="site" description="Cleavage" evidence="2">
    <location>
        <begin position="586"/>
        <end position="587"/>
    </location>
</feature>
<feature type="site" description="Cleavage" evidence="2">
    <location>
        <begin position="605"/>
        <end position="606"/>
    </location>
</feature>
<feature type="modified residue" description="Phosphothreonine" evidence="2">
    <location>
        <position position="54"/>
    </location>
</feature>
<feature type="modified residue" description="Phosphothreonine; by EEF2K" evidence="2">
    <location>
        <position position="57"/>
    </location>
</feature>
<feature type="modified residue" description="Phosphothreonine" evidence="2">
    <location>
        <position position="59"/>
    </location>
</feature>
<feature type="modified residue" description="N6-succinyllysine" evidence="4">
    <location>
        <position position="152"/>
    </location>
</feature>
<feature type="modified residue" description="N6-acetyllysine" evidence="2">
    <location>
        <position position="235"/>
    </location>
</feature>
<feature type="modified residue" description="N6-acetyllysine; alternate" evidence="2">
    <location>
        <position position="239"/>
    </location>
</feature>
<feature type="modified residue" description="Phosphotyrosine; by CSK" evidence="2">
    <location>
        <position position="265"/>
    </location>
</feature>
<feature type="modified residue" description="N6-acetyllysine; alternate" evidence="2">
    <location>
        <position position="272"/>
    </location>
</feature>
<feature type="modified residue" description="N6-succinyllysine; alternate" evidence="4">
    <location>
        <position position="272"/>
    </location>
</feature>
<feature type="modified residue" description="N6-acetyllysine" evidence="2">
    <location>
        <position position="275"/>
    </location>
</feature>
<feature type="modified residue" description="Phosphoserine" evidence="1">
    <location>
        <position position="325"/>
    </location>
</feature>
<feature type="modified residue" description="Phosphotyrosine; by CSK" evidence="2">
    <location>
        <position position="373"/>
    </location>
</feature>
<feature type="modified residue" description="Phosphothreonine" evidence="2">
    <location>
        <position position="435"/>
    </location>
</feature>
<feature type="modified residue" description="N6-acetyllysine" evidence="4">
    <location>
        <position position="439"/>
    </location>
</feature>
<feature type="modified residue" description="N6-acetyllysine" evidence="2">
    <location>
        <position position="445"/>
    </location>
</feature>
<feature type="modified residue" description="Phosphoserine" evidence="2">
    <location>
        <position position="502"/>
    </location>
</feature>
<feature type="modified residue" description="N6,N6,N6-trimethyllysine; by EEF2KMT" evidence="2">
    <location>
        <position position="525"/>
    </location>
</feature>
<feature type="modified residue" description="N6-succinyllysine" evidence="4">
    <location>
        <position position="572"/>
    </location>
</feature>
<feature type="modified residue" description="Phosphoserine; by CDK2" evidence="2">
    <location>
        <position position="595"/>
    </location>
</feature>
<feature type="modified residue" description="N6-acetyllysine" evidence="4">
    <location>
        <position position="619"/>
    </location>
</feature>
<feature type="modified residue" description="Diphthamide" evidence="1">
    <location>
        <position position="715"/>
    </location>
</feature>
<feature type="cross-link" description="Glycyl lysine isopeptide (Lys-Gly) (interchain with G-Cter in SUMO1); alternate" evidence="2">
    <location>
        <position position="239"/>
    </location>
</feature>
<feature type="cross-link" description="Glycyl lysine isopeptide (Lys-Gly) (interchain with G-Cter in SUMO)" evidence="2">
    <location>
        <position position="322"/>
    </location>
</feature>
<feature type="cross-link" description="Glycyl lysine isopeptide (Lys-Gly) (interchain with G-Cter in SUMO)" evidence="2">
    <location>
        <position position="529"/>
    </location>
</feature>
<feature type="sequence conflict" description="In Ref. 1; CAH90954." evidence="7" ref="1">
    <original>V</original>
    <variation>A</variation>
    <location>
        <position position="233"/>
    </location>
</feature>
<feature type="sequence conflict" description="In Ref. 1; CAH91767." evidence="7" ref="1">
    <original>P</original>
    <variation>A</variation>
    <location>
        <position position="286"/>
    </location>
</feature>
<feature type="sequence conflict" description="In Ref. 1; CAH91767." evidence="7" ref="1">
    <original>F</original>
    <variation>L</variation>
    <location>
        <position position="794"/>
    </location>
</feature>
<keyword id="KW-0007">Acetylation</keyword>
<keyword id="KW-0963">Cytoplasm</keyword>
<keyword id="KW-0251">Elongation factor</keyword>
<keyword id="KW-0342">GTP-binding</keyword>
<keyword id="KW-0378">Hydrolase</keyword>
<keyword id="KW-1017">Isopeptide bond</keyword>
<keyword id="KW-0488">Methylation</keyword>
<keyword id="KW-0547">Nucleotide-binding</keyword>
<keyword id="KW-0539">Nucleus</keyword>
<keyword id="KW-0597">Phosphoprotein</keyword>
<keyword id="KW-0648">Protein biosynthesis</keyword>
<keyword id="KW-1185">Reference proteome</keyword>
<keyword id="KW-0832">Ubl conjugation</keyword>
<evidence type="ECO:0000250" key="1">
    <source>
        <dbReference type="UniProtKB" id="P05197"/>
    </source>
</evidence>
<evidence type="ECO:0000250" key="2">
    <source>
        <dbReference type="UniProtKB" id="P13639"/>
    </source>
</evidence>
<evidence type="ECO:0000250" key="3">
    <source>
        <dbReference type="UniProtKB" id="P32324"/>
    </source>
</evidence>
<evidence type="ECO:0000250" key="4">
    <source>
        <dbReference type="UniProtKB" id="P58252"/>
    </source>
</evidence>
<evidence type="ECO:0000250" key="5">
    <source>
        <dbReference type="UniProtKB" id="Q7ZXP8"/>
    </source>
</evidence>
<evidence type="ECO:0000255" key="6">
    <source>
        <dbReference type="PROSITE-ProRule" id="PRU01059"/>
    </source>
</evidence>
<evidence type="ECO:0000305" key="7"/>
<organism>
    <name type="scientific">Pongo abelii</name>
    <name type="common">Sumatran orangutan</name>
    <name type="synonym">Pongo pygmaeus abelii</name>
    <dbReference type="NCBI Taxonomy" id="9601"/>
    <lineage>
        <taxon>Eukaryota</taxon>
        <taxon>Metazoa</taxon>
        <taxon>Chordata</taxon>
        <taxon>Craniata</taxon>
        <taxon>Vertebrata</taxon>
        <taxon>Euteleostomi</taxon>
        <taxon>Mammalia</taxon>
        <taxon>Eutheria</taxon>
        <taxon>Euarchontoglires</taxon>
        <taxon>Primates</taxon>
        <taxon>Haplorrhini</taxon>
        <taxon>Catarrhini</taxon>
        <taxon>Hominidae</taxon>
        <taxon>Pongo</taxon>
    </lineage>
</organism>
<dbReference type="EC" id="3.6.5.-" evidence="2"/>
<dbReference type="EMBL" id="CR858745">
    <property type="protein sequence ID" value="CAH90954.1"/>
    <property type="molecule type" value="mRNA"/>
</dbReference>
<dbReference type="EMBL" id="CR859604">
    <property type="protein sequence ID" value="CAH91767.1"/>
    <property type="molecule type" value="mRNA"/>
</dbReference>
<dbReference type="RefSeq" id="NP_001125547.1">
    <property type="nucleotide sequence ID" value="NM_001132075.1"/>
</dbReference>
<dbReference type="SMR" id="Q5R8Z3"/>
<dbReference type="FunCoup" id="Q5R8Z3">
    <property type="interactions" value="2236"/>
</dbReference>
<dbReference type="STRING" id="9601.ENSPPYP00000010534"/>
<dbReference type="Ensembl" id="ENSPPYT00000010948.3">
    <property type="protein sequence ID" value="ENSPPYP00000010534.2"/>
    <property type="gene ID" value="ENSPPYG00000009393.3"/>
</dbReference>
<dbReference type="GeneID" id="100172460"/>
<dbReference type="KEGG" id="pon:100172460"/>
<dbReference type="CTD" id="1938"/>
<dbReference type="eggNOG" id="KOG0469">
    <property type="taxonomic scope" value="Eukaryota"/>
</dbReference>
<dbReference type="GeneTree" id="ENSGT00940000154662"/>
<dbReference type="HOGENOM" id="CLU_002794_11_1_1"/>
<dbReference type="InParanoid" id="Q5R8Z3"/>
<dbReference type="OrthoDB" id="364892at2759"/>
<dbReference type="TreeFam" id="TF300575"/>
<dbReference type="Proteomes" id="UP000001595">
    <property type="component" value="Chromosome 19"/>
</dbReference>
<dbReference type="GO" id="GO:0005737">
    <property type="term" value="C:cytoplasm"/>
    <property type="evidence" value="ECO:0000250"/>
    <property type="project" value="UniProtKB"/>
</dbReference>
<dbReference type="GO" id="GO:0005829">
    <property type="term" value="C:cytosol"/>
    <property type="evidence" value="ECO:0007669"/>
    <property type="project" value="TreeGrafter"/>
</dbReference>
<dbReference type="GO" id="GO:0005634">
    <property type="term" value="C:nucleus"/>
    <property type="evidence" value="ECO:0007669"/>
    <property type="project" value="UniProtKB-SubCell"/>
</dbReference>
<dbReference type="GO" id="GO:1990904">
    <property type="term" value="C:ribonucleoprotein complex"/>
    <property type="evidence" value="ECO:0007669"/>
    <property type="project" value="TreeGrafter"/>
</dbReference>
<dbReference type="GO" id="GO:0005525">
    <property type="term" value="F:GTP binding"/>
    <property type="evidence" value="ECO:0007669"/>
    <property type="project" value="UniProtKB-KW"/>
</dbReference>
<dbReference type="GO" id="GO:0003924">
    <property type="term" value="F:GTPase activity"/>
    <property type="evidence" value="ECO:0000250"/>
    <property type="project" value="UniProtKB"/>
</dbReference>
<dbReference type="GO" id="GO:0043022">
    <property type="term" value="F:ribosome binding"/>
    <property type="evidence" value="ECO:0007669"/>
    <property type="project" value="TreeGrafter"/>
</dbReference>
<dbReference type="GO" id="GO:0003746">
    <property type="term" value="F:translation elongation factor activity"/>
    <property type="evidence" value="ECO:0000250"/>
    <property type="project" value="UniProtKB"/>
</dbReference>
<dbReference type="GO" id="GO:0006414">
    <property type="term" value="P:translational elongation"/>
    <property type="evidence" value="ECO:0000250"/>
    <property type="project" value="UniProtKB"/>
</dbReference>
<dbReference type="CDD" id="cd01681">
    <property type="entry name" value="aeEF2_snRNP_like_IV"/>
    <property type="match status" value="1"/>
</dbReference>
<dbReference type="CDD" id="cd04096">
    <property type="entry name" value="eEF2_snRNP_like_C"/>
    <property type="match status" value="1"/>
</dbReference>
<dbReference type="CDD" id="cd01885">
    <property type="entry name" value="EF2"/>
    <property type="match status" value="1"/>
</dbReference>
<dbReference type="CDD" id="cd16261">
    <property type="entry name" value="EF2_snRNP_III"/>
    <property type="match status" value="1"/>
</dbReference>
<dbReference type="CDD" id="cd03700">
    <property type="entry name" value="EF2_snRNP_like_II"/>
    <property type="match status" value="1"/>
</dbReference>
<dbReference type="FunFam" id="3.90.1430.10:FF:000003">
    <property type="entry name" value="Elongation factor 2"/>
    <property type="match status" value="1"/>
</dbReference>
<dbReference type="FunFam" id="2.40.30.10:FF:000010">
    <property type="entry name" value="Translation elongation factor 2"/>
    <property type="match status" value="1"/>
</dbReference>
<dbReference type="FunFam" id="3.30.230.10:FF:000006">
    <property type="entry name" value="Translation elongation factor 2"/>
    <property type="match status" value="1"/>
</dbReference>
<dbReference type="FunFam" id="3.30.70.240:FF:000003">
    <property type="entry name" value="Translation elongation factor 2"/>
    <property type="match status" value="1"/>
</dbReference>
<dbReference type="FunFam" id="3.30.70.870:FF:000002">
    <property type="entry name" value="Translation elongation factor 2"/>
    <property type="match status" value="1"/>
</dbReference>
<dbReference type="FunFam" id="3.40.50.300:FF:000058">
    <property type="entry name" value="Translation elongation factor 2"/>
    <property type="match status" value="1"/>
</dbReference>
<dbReference type="Gene3D" id="3.30.230.10">
    <property type="match status" value="1"/>
</dbReference>
<dbReference type="Gene3D" id="3.30.70.240">
    <property type="match status" value="1"/>
</dbReference>
<dbReference type="Gene3D" id="3.30.70.870">
    <property type="entry name" value="Elongation Factor G (Translational Gtpase), domain 3"/>
    <property type="match status" value="1"/>
</dbReference>
<dbReference type="Gene3D" id="3.40.50.300">
    <property type="entry name" value="P-loop containing nucleotide triphosphate hydrolases"/>
    <property type="match status" value="1"/>
</dbReference>
<dbReference type="Gene3D" id="2.40.30.10">
    <property type="entry name" value="Translation factors"/>
    <property type="match status" value="1"/>
</dbReference>
<dbReference type="InterPro" id="IPR041095">
    <property type="entry name" value="EFG_II"/>
</dbReference>
<dbReference type="InterPro" id="IPR035647">
    <property type="entry name" value="EFG_III/V"/>
</dbReference>
<dbReference type="InterPro" id="IPR000640">
    <property type="entry name" value="EFG_V-like"/>
</dbReference>
<dbReference type="InterPro" id="IPR004161">
    <property type="entry name" value="EFTu-like_2"/>
</dbReference>
<dbReference type="InterPro" id="IPR031157">
    <property type="entry name" value="G_TR_CS"/>
</dbReference>
<dbReference type="InterPro" id="IPR027417">
    <property type="entry name" value="P-loop_NTPase"/>
</dbReference>
<dbReference type="InterPro" id="IPR020568">
    <property type="entry name" value="Ribosomal_Su5_D2-typ_SF"/>
</dbReference>
<dbReference type="InterPro" id="IPR014721">
    <property type="entry name" value="Ribsml_uS5_D2-typ_fold_subgr"/>
</dbReference>
<dbReference type="InterPro" id="IPR005225">
    <property type="entry name" value="Small_GTP-bd"/>
</dbReference>
<dbReference type="InterPro" id="IPR000795">
    <property type="entry name" value="T_Tr_GTP-bd_dom"/>
</dbReference>
<dbReference type="InterPro" id="IPR009000">
    <property type="entry name" value="Transl_B-barrel_sf"/>
</dbReference>
<dbReference type="InterPro" id="IPR005517">
    <property type="entry name" value="Transl_elong_EFG/EF2_IV"/>
</dbReference>
<dbReference type="NCBIfam" id="TIGR00231">
    <property type="entry name" value="small_GTP"/>
    <property type="match status" value="1"/>
</dbReference>
<dbReference type="PANTHER" id="PTHR42908:SF35">
    <property type="entry name" value="ELONGATION FACTOR 2"/>
    <property type="match status" value="1"/>
</dbReference>
<dbReference type="PANTHER" id="PTHR42908">
    <property type="entry name" value="TRANSLATION ELONGATION FACTOR-RELATED"/>
    <property type="match status" value="1"/>
</dbReference>
<dbReference type="Pfam" id="PF00679">
    <property type="entry name" value="EFG_C"/>
    <property type="match status" value="1"/>
</dbReference>
<dbReference type="Pfam" id="PF14492">
    <property type="entry name" value="EFG_III"/>
    <property type="match status" value="1"/>
</dbReference>
<dbReference type="Pfam" id="PF03764">
    <property type="entry name" value="EFG_IV"/>
    <property type="match status" value="1"/>
</dbReference>
<dbReference type="Pfam" id="PF00009">
    <property type="entry name" value="GTP_EFTU"/>
    <property type="match status" value="1"/>
</dbReference>
<dbReference type="Pfam" id="PF03144">
    <property type="entry name" value="GTP_EFTU_D2"/>
    <property type="match status" value="1"/>
</dbReference>
<dbReference type="PRINTS" id="PR00315">
    <property type="entry name" value="ELONGATNFCT"/>
</dbReference>
<dbReference type="SMART" id="SM00838">
    <property type="entry name" value="EFG_C"/>
    <property type="match status" value="1"/>
</dbReference>
<dbReference type="SMART" id="SM00889">
    <property type="entry name" value="EFG_IV"/>
    <property type="match status" value="1"/>
</dbReference>
<dbReference type="SUPFAM" id="SSF54980">
    <property type="entry name" value="EF-G C-terminal domain-like"/>
    <property type="match status" value="2"/>
</dbReference>
<dbReference type="SUPFAM" id="SSF52540">
    <property type="entry name" value="P-loop containing nucleoside triphosphate hydrolases"/>
    <property type="match status" value="1"/>
</dbReference>
<dbReference type="SUPFAM" id="SSF54211">
    <property type="entry name" value="Ribosomal protein S5 domain 2-like"/>
    <property type="match status" value="1"/>
</dbReference>
<dbReference type="SUPFAM" id="SSF50447">
    <property type="entry name" value="Translation proteins"/>
    <property type="match status" value="1"/>
</dbReference>
<dbReference type="PROSITE" id="PS00301">
    <property type="entry name" value="G_TR_1"/>
    <property type="match status" value="1"/>
</dbReference>
<dbReference type="PROSITE" id="PS51722">
    <property type="entry name" value="G_TR_2"/>
    <property type="match status" value="1"/>
</dbReference>
<proteinExistence type="evidence at transcript level"/>